<feature type="chain" id="PRO_0000456451" description="Non-reducing polyketide synthase Preu3">
    <location>
        <begin position="1"/>
        <end position="2523"/>
    </location>
</feature>
<feature type="domain" description="Ketosynthase family 3 (KS3)" evidence="3 9">
    <location>
        <begin position="373"/>
        <end position="792"/>
    </location>
</feature>
<feature type="domain" description="PKS/mFAS DH" evidence="4">
    <location>
        <begin position="1271"/>
        <end position="1573"/>
    </location>
</feature>
<feature type="domain" description="Carrier" evidence="2">
    <location>
        <begin position="1639"/>
        <end position="1713"/>
    </location>
</feature>
<feature type="region of interest" description="N-terminal acylcarrier protein transacylase domain (SAT)" evidence="1 9">
    <location>
        <begin position="58"/>
        <end position="247"/>
    </location>
</feature>
<feature type="region of interest" description="Malonyl-CoA:ACP transacylase (MAT) domain" evidence="1 9">
    <location>
        <begin position="900"/>
        <end position="1207"/>
    </location>
</feature>
<feature type="region of interest" description="N-terminal hotdog fold" evidence="4">
    <location>
        <begin position="1271"/>
        <end position="1398"/>
    </location>
</feature>
<feature type="region of interest" description="Product template (PT) domain" evidence="1 9">
    <location>
        <begin position="1301"/>
        <end position="1568"/>
    </location>
</feature>
<feature type="region of interest" description="C-terminal hotdog fold" evidence="4">
    <location>
        <begin position="1421"/>
        <end position="1573"/>
    </location>
</feature>
<feature type="region of interest" description="Disordered" evidence="6">
    <location>
        <begin position="1579"/>
        <end position="1601"/>
    </location>
</feature>
<feature type="region of interest" description="Disordered" evidence="6">
    <location>
        <begin position="1735"/>
        <end position="1757"/>
    </location>
</feature>
<feature type="region of interest" description="Methyltransferase (CMeT) domain" evidence="1 9">
    <location>
        <begin position="1986"/>
        <end position="2085"/>
    </location>
</feature>
<feature type="region of interest" description="Thioesterase (TE) domain" evidence="1 9">
    <location>
        <begin position="2218"/>
        <end position="2520"/>
    </location>
</feature>
<feature type="compositionally biased region" description="Acidic residues" evidence="6">
    <location>
        <begin position="1738"/>
        <end position="1749"/>
    </location>
</feature>
<feature type="active site" description="For beta-ketoacyl synthase activity" evidence="3">
    <location>
        <position position="539"/>
    </location>
</feature>
<feature type="active site" description="For beta-ketoacyl synthase activity" evidence="3">
    <location>
        <position position="674"/>
    </location>
</feature>
<feature type="active site" description="For beta-ketoacyl synthase activity" evidence="3">
    <location>
        <position position="715"/>
    </location>
</feature>
<feature type="active site" description="For acyl/malonyl transferase activity" evidence="5">
    <location>
        <position position="986"/>
    </location>
</feature>
<feature type="active site" description="Proton acceptor; for dehydratase activity" evidence="4">
    <location>
        <position position="1305"/>
    </location>
</feature>
<feature type="active site" description="Proton donor; for dehydratase activity" evidence="4">
    <location>
        <position position="1483"/>
    </location>
</feature>
<feature type="modified residue" description="O-(pantetheine 4'-phosphoryl)serine" evidence="2">
    <location>
        <position position="1673"/>
    </location>
</feature>
<reference key="1">
    <citation type="journal article" date="2022" name="Front. Microbiol.">
        <title>Cloning and functional characterization of the polyketide synthases based on genome mining of Preussia isomera XL-1326.</title>
        <authorList>
            <person name="Liu Q."/>
            <person name="Zhang D."/>
            <person name="Xu Y."/>
            <person name="Gao S."/>
            <person name="Gong Y."/>
            <person name="Cai X."/>
            <person name="Yao M."/>
            <person name="Yang X."/>
        </authorList>
    </citation>
    <scope>NUCLEOTIDE SEQUENCE [MRNA]</scope>
    <scope>FUNCTION</scope>
    <scope>DOMAIN</scope>
    <scope>CATALYTIC ACTIVITY</scope>
    <source>
        <strain>XL-1326</strain>
    </source>
</reference>
<organism>
    <name type="scientific">Preussia isomera</name>
    <name type="common">Coprophilous fungus</name>
    <name type="synonym">Honoratia pisana</name>
    <dbReference type="NCBI Taxonomy" id="325670"/>
    <lineage>
        <taxon>Eukaryota</taxon>
        <taxon>Fungi</taxon>
        <taxon>Dikarya</taxon>
        <taxon>Ascomycota</taxon>
        <taxon>Pezizomycotina</taxon>
        <taxon>Dothideomycetes</taxon>
        <taxon>Pleosporomycetidae</taxon>
        <taxon>Pleosporales</taxon>
        <taxon>Sporormiaceae</taxon>
        <taxon>Preussia/Sporomiella species complex</taxon>
        <taxon>Preussia</taxon>
    </lineage>
</organism>
<proteinExistence type="evidence at protein level"/>
<dbReference type="EC" id="2.3.1.-" evidence="7"/>
<dbReference type="EMBL" id="OK493437">
    <property type="protein sequence ID" value="UNY67715.1"/>
    <property type="molecule type" value="mRNA"/>
</dbReference>
<dbReference type="SMR" id="P9WET6"/>
<dbReference type="GO" id="GO:0004312">
    <property type="term" value="F:fatty acid synthase activity"/>
    <property type="evidence" value="ECO:0007669"/>
    <property type="project" value="TreeGrafter"/>
</dbReference>
<dbReference type="GO" id="GO:0008168">
    <property type="term" value="F:methyltransferase activity"/>
    <property type="evidence" value="ECO:0007669"/>
    <property type="project" value="UniProtKB-KW"/>
</dbReference>
<dbReference type="GO" id="GO:0031177">
    <property type="term" value="F:phosphopantetheine binding"/>
    <property type="evidence" value="ECO:0007669"/>
    <property type="project" value="InterPro"/>
</dbReference>
<dbReference type="GO" id="GO:0008236">
    <property type="term" value="F:serine-type peptidase activity"/>
    <property type="evidence" value="ECO:0007669"/>
    <property type="project" value="InterPro"/>
</dbReference>
<dbReference type="GO" id="GO:0006633">
    <property type="term" value="P:fatty acid biosynthetic process"/>
    <property type="evidence" value="ECO:0007669"/>
    <property type="project" value="TreeGrafter"/>
</dbReference>
<dbReference type="GO" id="GO:0032259">
    <property type="term" value="P:methylation"/>
    <property type="evidence" value="ECO:0007669"/>
    <property type="project" value="UniProtKB-KW"/>
</dbReference>
<dbReference type="GO" id="GO:0006508">
    <property type="term" value="P:proteolysis"/>
    <property type="evidence" value="ECO:0007669"/>
    <property type="project" value="InterPro"/>
</dbReference>
<dbReference type="GO" id="GO:0044550">
    <property type="term" value="P:secondary metabolite biosynthetic process"/>
    <property type="evidence" value="ECO:0007669"/>
    <property type="project" value="TreeGrafter"/>
</dbReference>
<dbReference type="CDD" id="cd00833">
    <property type="entry name" value="PKS"/>
    <property type="match status" value="1"/>
</dbReference>
<dbReference type="Gene3D" id="3.30.70.3290">
    <property type="match status" value="1"/>
</dbReference>
<dbReference type="Gene3D" id="3.40.47.10">
    <property type="match status" value="1"/>
</dbReference>
<dbReference type="Gene3D" id="1.10.1200.10">
    <property type="entry name" value="ACP-like"/>
    <property type="match status" value="1"/>
</dbReference>
<dbReference type="Gene3D" id="3.40.50.1820">
    <property type="entry name" value="alpha/beta hydrolase"/>
    <property type="match status" value="1"/>
</dbReference>
<dbReference type="Gene3D" id="3.40.366.10">
    <property type="entry name" value="Malonyl-Coenzyme A Acyl Carrier Protein, domain 2"/>
    <property type="match status" value="2"/>
</dbReference>
<dbReference type="Gene3D" id="3.10.129.110">
    <property type="entry name" value="Polyketide synthase dehydratase"/>
    <property type="match status" value="1"/>
</dbReference>
<dbReference type="Gene3D" id="3.40.50.150">
    <property type="entry name" value="Vaccinia Virus protein VP39"/>
    <property type="match status" value="1"/>
</dbReference>
<dbReference type="InterPro" id="IPR013094">
    <property type="entry name" value="AB_hydrolase_3"/>
</dbReference>
<dbReference type="InterPro" id="IPR029058">
    <property type="entry name" value="AB_hydrolase_fold"/>
</dbReference>
<dbReference type="InterPro" id="IPR001227">
    <property type="entry name" value="Ac_transferase_dom_sf"/>
</dbReference>
<dbReference type="InterPro" id="IPR036736">
    <property type="entry name" value="ACP-like_sf"/>
</dbReference>
<dbReference type="InterPro" id="IPR014043">
    <property type="entry name" value="Acyl_transferase_dom"/>
</dbReference>
<dbReference type="InterPro" id="IPR016035">
    <property type="entry name" value="Acyl_Trfase/lysoPLipase"/>
</dbReference>
<dbReference type="InterPro" id="IPR014031">
    <property type="entry name" value="Ketoacyl_synth_C"/>
</dbReference>
<dbReference type="InterPro" id="IPR014030">
    <property type="entry name" value="Ketoacyl_synth_N"/>
</dbReference>
<dbReference type="InterPro" id="IPR016036">
    <property type="entry name" value="Malonyl_transacylase_ACP-bd"/>
</dbReference>
<dbReference type="InterPro" id="IPR013217">
    <property type="entry name" value="Methyltransf_12"/>
</dbReference>
<dbReference type="InterPro" id="IPR001375">
    <property type="entry name" value="Peptidase_S9_cat"/>
</dbReference>
<dbReference type="InterPro" id="IPR020841">
    <property type="entry name" value="PKS_Beta-ketoAc_synthase_dom"/>
</dbReference>
<dbReference type="InterPro" id="IPR042104">
    <property type="entry name" value="PKS_dehydratase_sf"/>
</dbReference>
<dbReference type="InterPro" id="IPR049551">
    <property type="entry name" value="PKS_DH_C"/>
</dbReference>
<dbReference type="InterPro" id="IPR049552">
    <property type="entry name" value="PKS_DH_N"/>
</dbReference>
<dbReference type="InterPro" id="IPR049900">
    <property type="entry name" value="PKS_mFAS_DH"/>
</dbReference>
<dbReference type="InterPro" id="IPR050091">
    <property type="entry name" value="PKS_NRPS_Biosynth_Enz"/>
</dbReference>
<dbReference type="InterPro" id="IPR020806">
    <property type="entry name" value="PKS_PP-bd"/>
</dbReference>
<dbReference type="InterPro" id="IPR009081">
    <property type="entry name" value="PP-bd_ACP"/>
</dbReference>
<dbReference type="InterPro" id="IPR029063">
    <property type="entry name" value="SAM-dependent_MTases_sf"/>
</dbReference>
<dbReference type="InterPro" id="IPR032088">
    <property type="entry name" value="SAT"/>
</dbReference>
<dbReference type="InterPro" id="IPR016039">
    <property type="entry name" value="Thiolase-like"/>
</dbReference>
<dbReference type="PANTHER" id="PTHR43775">
    <property type="entry name" value="FATTY ACID SYNTHASE"/>
    <property type="match status" value="1"/>
</dbReference>
<dbReference type="PANTHER" id="PTHR43775:SF21">
    <property type="entry name" value="NON-REDUCING POLYKETIDE SYNTHASE AUSA-RELATED"/>
    <property type="match status" value="1"/>
</dbReference>
<dbReference type="Pfam" id="PF07859">
    <property type="entry name" value="Abhydrolase_3"/>
    <property type="match status" value="1"/>
</dbReference>
<dbReference type="Pfam" id="PF00698">
    <property type="entry name" value="Acyl_transf_1"/>
    <property type="match status" value="1"/>
</dbReference>
<dbReference type="Pfam" id="PF18558">
    <property type="entry name" value="HTH_51"/>
    <property type="match status" value="1"/>
</dbReference>
<dbReference type="Pfam" id="PF00109">
    <property type="entry name" value="ketoacyl-synt"/>
    <property type="match status" value="1"/>
</dbReference>
<dbReference type="Pfam" id="PF02801">
    <property type="entry name" value="Ketoacyl-synt_C"/>
    <property type="match status" value="1"/>
</dbReference>
<dbReference type="Pfam" id="PF08242">
    <property type="entry name" value="Methyltransf_12"/>
    <property type="match status" value="1"/>
</dbReference>
<dbReference type="Pfam" id="PF00326">
    <property type="entry name" value="Peptidase_S9"/>
    <property type="match status" value="1"/>
</dbReference>
<dbReference type="Pfam" id="PF21089">
    <property type="entry name" value="PKS_DH_N"/>
    <property type="match status" value="1"/>
</dbReference>
<dbReference type="Pfam" id="PF00550">
    <property type="entry name" value="PP-binding"/>
    <property type="match status" value="1"/>
</dbReference>
<dbReference type="Pfam" id="PF14765">
    <property type="entry name" value="PS-DH"/>
    <property type="match status" value="1"/>
</dbReference>
<dbReference type="Pfam" id="PF16073">
    <property type="entry name" value="SAT"/>
    <property type="match status" value="1"/>
</dbReference>
<dbReference type="SMART" id="SM00827">
    <property type="entry name" value="PKS_AT"/>
    <property type="match status" value="1"/>
</dbReference>
<dbReference type="SMART" id="SM00825">
    <property type="entry name" value="PKS_KS"/>
    <property type="match status" value="1"/>
</dbReference>
<dbReference type="SMART" id="SM00823">
    <property type="entry name" value="PKS_PP"/>
    <property type="match status" value="1"/>
</dbReference>
<dbReference type="SUPFAM" id="SSF47336">
    <property type="entry name" value="ACP-like"/>
    <property type="match status" value="1"/>
</dbReference>
<dbReference type="SUPFAM" id="SSF53474">
    <property type="entry name" value="alpha/beta-Hydrolases"/>
    <property type="match status" value="1"/>
</dbReference>
<dbReference type="SUPFAM" id="SSF52151">
    <property type="entry name" value="FabD/lysophospholipase-like"/>
    <property type="match status" value="1"/>
</dbReference>
<dbReference type="SUPFAM" id="SSF55048">
    <property type="entry name" value="Probable ACP-binding domain of malonyl-CoA ACP transacylase"/>
    <property type="match status" value="1"/>
</dbReference>
<dbReference type="SUPFAM" id="SSF53335">
    <property type="entry name" value="S-adenosyl-L-methionine-dependent methyltransferases"/>
    <property type="match status" value="1"/>
</dbReference>
<dbReference type="SUPFAM" id="SSF53901">
    <property type="entry name" value="Thiolase-like"/>
    <property type="match status" value="1"/>
</dbReference>
<dbReference type="PROSITE" id="PS50075">
    <property type="entry name" value="CARRIER"/>
    <property type="match status" value="1"/>
</dbReference>
<dbReference type="PROSITE" id="PS52004">
    <property type="entry name" value="KS3_2"/>
    <property type="match status" value="1"/>
</dbReference>
<dbReference type="PROSITE" id="PS52019">
    <property type="entry name" value="PKS_MFAS_DH"/>
    <property type="match status" value="1"/>
</dbReference>
<accession>P9WET6</accession>
<sequence length="2523" mass="275780">MNPPSALAFGPEERIPTASNLRLLKDVLQDDPTFAGITACLKQLPDTWKALLHQDAQLQSLASERRAAVLSNSLLNDEQHEGDMDTNQVIMPMTVLVHMVQYRQFLQQSSPSSHATVMQSVAAGGVQGFCAGLLSAFAVCSMTNEDDFDACATYAIKLAMCVGAYVDLAMESEKGDMASAIVRWSIPDGRNRVNKAVGRYQSAYISAISDEDNVTVTASRPDLDAICTSLGSTGMSSKILAMTGSFHHPKNFDLLQRMISLLRAPQLAPSTKFTNALLRSNSTGELLTGAKTIENILEDILCKTADWRLTMANTSKALRSGNGSRPNIHTFGLVEFIPSFVKNEFNILTQRLAPTAKEQTGASPSKSTLQYNDNAVAVVGMACRFPGADDLDEFWELLQSGKSMHERMPADRFSTTGLRRSNDGAPFWGNFLKDIDAFDHQFFKKSSREAAAMDPQQRLLLQCAYVAMENAGYFDPSVQHKIRDTGVYLGACSSDYNDNVASHKPTAYSTLGTLRAFLTGRISHYFDWTGPSVVYDTACSSSAVAIDAACKAILAGDCQQALAGGVSLYTSPNFYQNLDAASFLSQTGPCKPFDANADGYCRGEGVGLVVLKKLSDAIRCGDKIVAVIASTGVNQNRNCTGITVPHGGSQADLYRRVVAKSGLNASQVSYVEAHGTGTPVGDPIEFTSIKSVFANPDITRDEPLTIASVKGSIGHLEGAAGVASLIKVCLMLQHSAIPPQANFTKPNPNLGGVDMRNIVIPTSSIPWKARNKVACINNYGAAGSNGAMIVCQPSEPASKTQTRLPSQSLSYPLFISGDGTDAVEANCRAIAKYARQLQQKRAPSVVASLAYRLATSQNQNLSYAMVTTISENGDIESTLTKASATLTQPRSKAKQSVVLCFGGQVKAFVGLDQQLFDSSSILQKHLRLCDSTMRDLGYPSIFPAIFQSEPLKDPVQLHGVLFAMQYSSAKAWLDCSLQVDAVVGHSFGQLTALTVAGVLSLKDGLRLVCGRAHLIKTKWGSATGAMIAIEAPLIRVQEILSKISVAGHEAEIACYNARESHVLVGTTTAIDAVRTFVLESGIKHKRLPVTHGFHSTFTEALLPGLRELAKGLQFKSPIIPIETCTEYKSWEQATADMITKHTREPVYFVHAIERLSARLGPCTWVEAGTGASTPAMIKRCLPDSCADSFIHATLESNKAFGSLADATANLWRCSQPVQFWPFHASDRGRYVPLNLPGYQFRKTKHWLEWQDTVALPAFLEKEPSTSEPKGHELLTFSSFEDTSKSVAAFKVDPESDEFMMLVKGHAVVAQPLCPAPLYCELALRAIKHLSPETASNAPDIRDLQIHAPLGLKTNRNIRLVVQKNSIPGHWTFTVKSSMGSDDELTHAHGLVAFGGTVEQELASYQRLIGHQKIQSLMTDPECDALRGSATYKAFNRVVTYSSYYKGVQAIYGRQNEACGKIELSSGEEQMAQARGILTPLLADNFIQIAGLQINVLGDCEDHLVFVCTETQRIIYGPGLHQQPAARYEVYSTISQNGPKEVMSDVVVFDPATKNVEFVALGCRFTRVTVPGLRNALQAANGDARAQERPSGSRISPSPLAPELPAKIQIQSRENLDITEKSGRGKPPRVENIQIATPKVDYLAQVKALLHKVSDVPIDTIQKDSTLDDLGIDSLMVMEVQTEVHSEFQLTIPNKDWATLETPGKLAEYLAKTLGGSVPDSAPPGVQRVPALVISDAEQSSDESPYDSTDDSASGYGDLDIDTAATTPGIFATRDSSPFRKAALDSPNPVNKVAQRTFSDIRPKYDVFAAEEGFAGFWRDVYPRQKRLTLAYVVEAFAVMGCDLSDLAAGQILPKIEYLPQHVSLIKQLYVILADSTLITIENGTYRRTRVSVDTTPASDLLADILRAFPQHAEEHRLLDVTGSRLGDCLIGRADPLRLLFMDRANKELLDSVYANGPMYKAMSRLLGSYILDTMQQWQGQKPLRILEIGGGTGGTTKHIVKLLHQQGIDFTYCFSDLSRALVTKAKKTFSIYPQMEYMVLDIEAPPSSEYLGQFDLILSTNCIHATKNIQQTTKHMRQLLSSEGFICLVEFTRNIFWFDLVFGLLDGWWLFEDGRPHVLADENLWDQSLRAAGYGDVQWTEGQSEESKTLRLIAAFNVSNEDAKAANALASALAVPGRKGRTSATTIRWKQEGDLDLMADVYLPSDLDASTVSRPVALILHGGGHVLHTRKHINPRHIKMLQDLGFLPVSVDYRLCPEVNIRDGPMTDACEAVDWARNILPCLPVCSELRVDKEHVVVIGYSTGGHLALTTAFTTRVRGFKPPSAILGFYCPTNYSADWWRSPIYPELAQQSSSETFDLLEGVNEHAIAGYTPTVNNNVAALLMSLDDPRWRFVLHANWRAQTLPMLINGLPSKSRLARSGQTVDSVINREIPDAEDVASISPYDQIVRGSYSTPTFLLHGTKDDLIPWQQSIATVDALARRGVNARVEIIEGAEHCFDVWSDKYDGMIGRALEWLVEQCRNA</sequence>
<evidence type="ECO:0000255" key="1"/>
<evidence type="ECO:0000255" key="2">
    <source>
        <dbReference type="PROSITE-ProRule" id="PRU00258"/>
    </source>
</evidence>
<evidence type="ECO:0000255" key="3">
    <source>
        <dbReference type="PROSITE-ProRule" id="PRU01348"/>
    </source>
</evidence>
<evidence type="ECO:0000255" key="4">
    <source>
        <dbReference type="PROSITE-ProRule" id="PRU01363"/>
    </source>
</evidence>
<evidence type="ECO:0000255" key="5">
    <source>
        <dbReference type="PROSITE-ProRule" id="PRU10022"/>
    </source>
</evidence>
<evidence type="ECO:0000256" key="6">
    <source>
        <dbReference type="SAM" id="MobiDB-lite"/>
    </source>
</evidence>
<evidence type="ECO:0000269" key="7">
    <source>
    </source>
</evidence>
<evidence type="ECO:0000303" key="8">
    <source>
    </source>
</evidence>
<evidence type="ECO:0000305" key="9">
    <source>
    </source>
</evidence>
<gene>
    <name evidence="8" type="primary">Preu3</name>
</gene>
<name>PREU3_PREIS</name>
<comment type="function">
    <text evidence="7 9">Non-reducing polyketide synthase; part of a gene cluster that mediates the biosynthesis of a yet unidentified natural product (Probable). The first step in the pathway is performed by Preu3 that condenses one acetyl-CoA starter unit with 3 malonyl-CoA units (PubMed:35602042). Preu3 also catalyzes one methylation step to produce 3-methylorsellinate, an intermediate that exhibits significant antibacterial activities against methicillin-resistant Staphylococcus aureus, multidrug-resistant Enterococcus faecalis, multidrug-resistant Enterococcus faecium, and multidrug-resistant Staphylococcus epidermidis (PubMed:35602042).</text>
</comment>
<comment type="catalytic activity">
    <reaction evidence="7">
        <text>3 malonyl-CoA + acetyl-CoA + S-adenosyl-L-methionine + H(+) = 3-methylorsellinate + S-adenosyl-L-homocysteine + 3 CO2 + 4 CoA</text>
        <dbReference type="Rhea" id="RHEA:64500"/>
        <dbReference type="ChEBI" id="CHEBI:15378"/>
        <dbReference type="ChEBI" id="CHEBI:16526"/>
        <dbReference type="ChEBI" id="CHEBI:57287"/>
        <dbReference type="ChEBI" id="CHEBI:57288"/>
        <dbReference type="ChEBI" id="CHEBI:57384"/>
        <dbReference type="ChEBI" id="CHEBI:57856"/>
        <dbReference type="ChEBI" id="CHEBI:59789"/>
        <dbReference type="ChEBI" id="CHEBI:146372"/>
    </reaction>
    <physiologicalReaction direction="left-to-right" evidence="7">
        <dbReference type="Rhea" id="RHEA:64501"/>
    </physiologicalReaction>
</comment>
<comment type="cofactor">
    <cofactor evidence="2">
        <name>pantetheine 4'-phosphate</name>
        <dbReference type="ChEBI" id="CHEBI:47942"/>
    </cofactor>
</comment>
<comment type="domain">
    <text evidence="9">Multidomain protein; including a starter unit:ACP transacylase (SAT) that selects the starter unit; a ketosynthase (KS) that catalyzes repeated decarboxylative condensation to elongate the polyketide backbone; a malonyl-CoA:ACP transacylase (MAT) that selects and transfers the extender unit malonyl-CoA; a product template (PT) domain that controls the immediate cyclization regioselectivity of the reactive polyketide backbone; and an acyl-carrier proteins (ACPs) that serves as the tether of the growing and completed polyketide via its phosphopantetheinyl arm.</text>
</comment>
<comment type="domain">
    <text evidence="7">The release of the polyketide chain from the non-reducing polyketide synthase is mediated by the thioesterase (TE) domain localized at the C-ter of the protein.</text>
</comment>
<protein>
    <recommendedName>
        <fullName evidence="8">Non-reducing polyketide synthase Preu3</fullName>
        <shortName evidence="8">NR-PKS Preu3</shortName>
        <ecNumber evidence="7">2.3.1.-</ecNumber>
    </recommendedName>
    <alternativeName>
        <fullName evidence="8">3-methylorsellinate synthase</fullName>
    </alternativeName>
</protein>
<keyword id="KW-0012">Acyltransferase</keyword>
<keyword id="KW-0489">Methyltransferase</keyword>
<keyword id="KW-0511">Multifunctional enzyme</keyword>
<keyword id="KW-0596">Phosphopantetheine</keyword>
<keyword id="KW-0597">Phosphoprotein</keyword>
<keyword id="KW-0808">Transferase</keyword>